<dbReference type="EC" id="6.1.1.10"/>
<dbReference type="EMBL" id="U00089">
    <property type="protein sequence ID" value="AAB95779.1"/>
    <property type="molecule type" value="Genomic_DNA"/>
</dbReference>
<dbReference type="PIR" id="S73457">
    <property type="entry name" value="S73457"/>
</dbReference>
<dbReference type="RefSeq" id="NP_109711.1">
    <property type="nucleotide sequence ID" value="NC_000912.1"/>
</dbReference>
<dbReference type="RefSeq" id="WP_010874380.1">
    <property type="nucleotide sequence ID" value="NZ_OU342337.1"/>
</dbReference>
<dbReference type="SMR" id="P75091"/>
<dbReference type="IntAct" id="P75091">
    <property type="interactions" value="9"/>
</dbReference>
<dbReference type="STRING" id="272634.MPN_023"/>
<dbReference type="EnsemblBacteria" id="AAB95779">
    <property type="protein sequence ID" value="AAB95779"/>
    <property type="gene ID" value="MPN_023"/>
</dbReference>
<dbReference type="KEGG" id="mpn:MPN_023"/>
<dbReference type="PATRIC" id="fig|272634.6.peg.22"/>
<dbReference type="HOGENOM" id="CLU_009710_9_2_14"/>
<dbReference type="OrthoDB" id="9810191at2"/>
<dbReference type="BioCyc" id="MPNE272634:G1GJ3-34-MONOMER"/>
<dbReference type="Proteomes" id="UP000000808">
    <property type="component" value="Chromosome"/>
</dbReference>
<dbReference type="GO" id="GO:0005737">
    <property type="term" value="C:cytoplasm"/>
    <property type="evidence" value="ECO:0007669"/>
    <property type="project" value="UniProtKB-SubCell"/>
</dbReference>
<dbReference type="GO" id="GO:0005524">
    <property type="term" value="F:ATP binding"/>
    <property type="evidence" value="ECO:0007669"/>
    <property type="project" value="UniProtKB-UniRule"/>
</dbReference>
<dbReference type="GO" id="GO:0046872">
    <property type="term" value="F:metal ion binding"/>
    <property type="evidence" value="ECO:0007669"/>
    <property type="project" value="UniProtKB-KW"/>
</dbReference>
<dbReference type="GO" id="GO:0004825">
    <property type="term" value="F:methionine-tRNA ligase activity"/>
    <property type="evidence" value="ECO:0007669"/>
    <property type="project" value="UniProtKB-UniRule"/>
</dbReference>
<dbReference type="GO" id="GO:0006431">
    <property type="term" value="P:methionyl-tRNA aminoacylation"/>
    <property type="evidence" value="ECO:0007669"/>
    <property type="project" value="UniProtKB-UniRule"/>
</dbReference>
<dbReference type="CDD" id="cd00814">
    <property type="entry name" value="MetRS_core"/>
    <property type="match status" value="1"/>
</dbReference>
<dbReference type="Gene3D" id="2.170.220.10">
    <property type="match status" value="1"/>
</dbReference>
<dbReference type="Gene3D" id="3.40.50.620">
    <property type="entry name" value="HUPs"/>
    <property type="match status" value="1"/>
</dbReference>
<dbReference type="Gene3D" id="1.10.730.10">
    <property type="entry name" value="Isoleucyl-tRNA Synthetase, Domain 1"/>
    <property type="match status" value="1"/>
</dbReference>
<dbReference type="HAMAP" id="MF_01228">
    <property type="entry name" value="Met_tRNA_synth_type2"/>
    <property type="match status" value="1"/>
</dbReference>
<dbReference type="InterPro" id="IPR014758">
    <property type="entry name" value="Met-tRNA_synth"/>
</dbReference>
<dbReference type="InterPro" id="IPR023457">
    <property type="entry name" value="Met-tRNA_synth_2"/>
</dbReference>
<dbReference type="InterPro" id="IPR015413">
    <property type="entry name" value="Methionyl/Leucyl_tRNA_Synth"/>
</dbReference>
<dbReference type="InterPro" id="IPR033911">
    <property type="entry name" value="MetRS_core"/>
</dbReference>
<dbReference type="InterPro" id="IPR014729">
    <property type="entry name" value="Rossmann-like_a/b/a_fold"/>
</dbReference>
<dbReference type="InterPro" id="IPR009080">
    <property type="entry name" value="tRNAsynth_Ia_anticodon-bd"/>
</dbReference>
<dbReference type="NCBIfam" id="TIGR00398">
    <property type="entry name" value="metG"/>
    <property type="match status" value="1"/>
</dbReference>
<dbReference type="PANTHER" id="PTHR43326:SF1">
    <property type="entry name" value="METHIONINE--TRNA LIGASE, MITOCHONDRIAL"/>
    <property type="match status" value="1"/>
</dbReference>
<dbReference type="PANTHER" id="PTHR43326">
    <property type="entry name" value="METHIONYL-TRNA SYNTHETASE"/>
    <property type="match status" value="1"/>
</dbReference>
<dbReference type="Pfam" id="PF09334">
    <property type="entry name" value="tRNA-synt_1g"/>
    <property type="match status" value="2"/>
</dbReference>
<dbReference type="PRINTS" id="PR01041">
    <property type="entry name" value="TRNASYNTHMET"/>
</dbReference>
<dbReference type="SUPFAM" id="SSF47323">
    <property type="entry name" value="Anticodon-binding domain of a subclass of class I aminoacyl-tRNA synthetases"/>
    <property type="match status" value="1"/>
</dbReference>
<dbReference type="SUPFAM" id="SSF52374">
    <property type="entry name" value="Nucleotidylyl transferase"/>
    <property type="match status" value="1"/>
</dbReference>
<feature type="chain" id="PRO_0000139229" description="Methionine--tRNA ligase">
    <location>
        <begin position="1"/>
        <end position="512"/>
    </location>
</feature>
<feature type="short sequence motif" description="'HIGH' region">
    <location>
        <begin position="11"/>
        <end position="21"/>
    </location>
</feature>
<feature type="short sequence motif" description="'KMSKS' region">
    <location>
        <begin position="301"/>
        <end position="305"/>
    </location>
</feature>
<feature type="binding site" evidence="1">
    <location>
        <position position="126"/>
    </location>
    <ligand>
        <name>Zn(2+)</name>
        <dbReference type="ChEBI" id="CHEBI:29105"/>
    </ligand>
</feature>
<feature type="binding site" evidence="1">
    <location>
        <position position="129"/>
    </location>
    <ligand>
        <name>Zn(2+)</name>
        <dbReference type="ChEBI" id="CHEBI:29105"/>
    </ligand>
</feature>
<feature type="binding site" evidence="1">
    <location>
        <position position="143"/>
    </location>
    <ligand>
        <name>Zn(2+)</name>
        <dbReference type="ChEBI" id="CHEBI:29105"/>
    </ligand>
</feature>
<feature type="binding site" evidence="1">
    <location>
        <position position="147"/>
    </location>
    <ligand>
        <name>Zn(2+)</name>
        <dbReference type="ChEBI" id="CHEBI:29105"/>
    </ligand>
</feature>
<feature type="binding site" evidence="1">
    <location>
        <position position="304"/>
    </location>
    <ligand>
        <name>ATP</name>
        <dbReference type="ChEBI" id="CHEBI:30616"/>
    </ligand>
</feature>
<proteinExistence type="evidence at protein level"/>
<sequence length="512" mass="59263">MKRCYITTPIYYASGKPHIGHAFTTILADVIKRYKQQNGYEAYFLTGTDEHGNKIESKAKSLGLDPQTFVDQNVAYFQQMWKQLDINFDHFIRTTDLSHKAQVQHAFQLLYDKGLIYQSNWEGAYCVECEQNYFTYDKQTMLCEIGHQLTLVQEPSLFIAFKDSKDWIGEMIATNKLNITPESRAAELKNNFLDGGLNDLALTRQNVTWGIPVPFDNKQTIYVWFDALFNYITNLGFAHNDPKFNKWWNNNDEEHEVIHLISREITRFHCIYWPIFLHQLGFKLPTQFLSHGWIVDGNGHKMSKSLGNVISPEELLAQFGVDGTRYCLLKEMRLDKDNRCSMAIFKDIYNADLANSFGNHASRTFGMIKKYLGGQLDFIEVQDPQVKQLMDQANQAMVQFDTAWNNFQFYKGINGLLQLVFQASKLIDQLKPWELVKQTDYTLLKQLLFACVRCTQVCFVLLAPILVHTSTQIFDLFNFSAQARSKTHLADPQQLQKISLAPVIQPLFKRLD</sequence>
<evidence type="ECO:0000250" key="1"/>
<evidence type="ECO:0000305" key="2"/>
<comment type="function">
    <text evidence="1">Is required not only for elongation of protein synthesis but also for the initiation of all mRNA translation through initiator tRNA(fMet) aminoacylation.</text>
</comment>
<comment type="catalytic activity">
    <reaction>
        <text>tRNA(Met) + L-methionine + ATP = L-methionyl-tRNA(Met) + AMP + diphosphate</text>
        <dbReference type="Rhea" id="RHEA:13481"/>
        <dbReference type="Rhea" id="RHEA-COMP:9667"/>
        <dbReference type="Rhea" id="RHEA-COMP:9698"/>
        <dbReference type="ChEBI" id="CHEBI:30616"/>
        <dbReference type="ChEBI" id="CHEBI:33019"/>
        <dbReference type="ChEBI" id="CHEBI:57844"/>
        <dbReference type="ChEBI" id="CHEBI:78442"/>
        <dbReference type="ChEBI" id="CHEBI:78530"/>
        <dbReference type="ChEBI" id="CHEBI:456215"/>
        <dbReference type="EC" id="6.1.1.10"/>
    </reaction>
</comment>
<comment type="cofactor">
    <cofactor evidence="1">
        <name>Zn(2+)</name>
        <dbReference type="ChEBI" id="CHEBI:29105"/>
    </cofactor>
    <text evidence="1">Binds 1 zinc ion per subunit.</text>
</comment>
<comment type="subunit">
    <text evidence="1">Monomer.</text>
</comment>
<comment type="subcellular location">
    <subcellularLocation>
        <location evidence="1">Cytoplasm</location>
    </subcellularLocation>
</comment>
<comment type="similarity">
    <text evidence="2">Belongs to the class-I aminoacyl-tRNA synthetase family. MetG type 2A subfamily.</text>
</comment>
<reference key="1">
    <citation type="journal article" date="1996" name="Nucleic Acids Res.">
        <title>Complete sequence analysis of the genome of the bacterium Mycoplasma pneumoniae.</title>
        <authorList>
            <person name="Himmelreich R."/>
            <person name="Hilbert H."/>
            <person name="Plagens H."/>
            <person name="Pirkl E."/>
            <person name="Li B.-C."/>
            <person name="Herrmann R."/>
        </authorList>
    </citation>
    <scope>NUCLEOTIDE SEQUENCE [LARGE SCALE GENOMIC DNA]</scope>
    <source>
        <strain>ATCC 29342 / M129 / Subtype 1</strain>
    </source>
</reference>
<reference key="2">
    <citation type="journal article" date="2000" name="Electrophoresis">
        <title>Towards a two-dimensional proteome map of Mycoplasma pneumoniae.</title>
        <authorList>
            <person name="Regula J.T."/>
            <person name="Ueberle B."/>
            <person name="Boguth G."/>
            <person name="Goerg A."/>
            <person name="Schnoelzer M."/>
            <person name="Herrmann R."/>
            <person name="Frank R."/>
        </authorList>
    </citation>
    <scope>IDENTIFICATION BY MASS SPECTROMETRY</scope>
    <source>
        <strain>ATCC 29342 / M129 / Subtype 1</strain>
    </source>
</reference>
<organism>
    <name type="scientific">Mycoplasma pneumoniae (strain ATCC 29342 / M129 / Subtype 1)</name>
    <name type="common">Mycoplasmoides pneumoniae</name>
    <dbReference type="NCBI Taxonomy" id="272634"/>
    <lineage>
        <taxon>Bacteria</taxon>
        <taxon>Bacillati</taxon>
        <taxon>Mycoplasmatota</taxon>
        <taxon>Mycoplasmoidales</taxon>
        <taxon>Mycoplasmoidaceae</taxon>
        <taxon>Mycoplasmoides</taxon>
    </lineage>
</organism>
<gene>
    <name type="primary">metG</name>
    <name type="synonym">metS</name>
    <name type="ordered locus">MPN_023</name>
    <name type="ORF">MP131</name>
</gene>
<protein>
    <recommendedName>
        <fullName>Methionine--tRNA ligase</fullName>
        <ecNumber>6.1.1.10</ecNumber>
    </recommendedName>
    <alternativeName>
        <fullName>Methionyl-tRNA synthetase</fullName>
        <shortName>MetRS</shortName>
    </alternativeName>
</protein>
<name>SYM_MYCPN</name>
<keyword id="KW-0030">Aminoacyl-tRNA synthetase</keyword>
<keyword id="KW-0067">ATP-binding</keyword>
<keyword id="KW-0963">Cytoplasm</keyword>
<keyword id="KW-0436">Ligase</keyword>
<keyword id="KW-0479">Metal-binding</keyword>
<keyword id="KW-0547">Nucleotide-binding</keyword>
<keyword id="KW-0648">Protein biosynthesis</keyword>
<keyword id="KW-1185">Reference proteome</keyword>
<keyword id="KW-0862">Zinc</keyword>
<accession>P75091</accession>